<sequence length="211" mass="24455">MRVRKRKGAEEHLANNPHYVILNPEDAKGRWHDVFGNDRPIHIEVGSGKGGFITGMALKNPDINYIGIDIQLSVLSYALDKVLASEVPNVKLLRVDGSSLTNYFEDGEVDMMYLNFSDPWPKTKHEKRRLTYKDFLDTYKRILPEHGEIHFKTDNRGLFEYSLASFSQYGMTLRQIWLDLHASNYEGNVMTEYEEKFSNKGQVIYRVEANF</sequence>
<organism>
    <name type="scientific">Streptococcus pyogenes serotype M2 (strain MGAS10270)</name>
    <dbReference type="NCBI Taxonomy" id="370552"/>
    <lineage>
        <taxon>Bacteria</taxon>
        <taxon>Bacillati</taxon>
        <taxon>Bacillota</taxon>
        <taxon>Bacilli</taxon>
        <taxon>Lactobacillales</taxon>
        <taxon>Streptococcaceae</taxon>
        <taxon>Streptococcus</taxon>
    </lineage>
</organism>
<name>TRMB_STRPD</name>
<keyword id="KW-0489">Methyltransferase</keyword>
<keyword id="KW-0949">S-adenosyl-L-methionine</keyword>
<keyword id="KW-0808">Transferase</keyword>
<keyword id="KW-0819">tRNA processing</keyword>
<protein>
    <recommendedName>
        <fullName evidence="2">tRNA (guanine-N(7)-)-methyltransferase</fullName>
        <ecNumber evidence="2">2.1.1.33</ecNumber>
    </recommendedName>
    <alternativeName>
        <fullName evidence="2">tRNA (guanine(46)-N(7))-methyltransferase</fullName>
    </alternativeName>
    <alternativeName>
        <fullName evidence="2">tRNA(m7G46)-methyltransferase</fullName>
    </alternativeName>
</protein>
<reference key="1">
    <citation type="journal article" date="2006" name="Proc. Natl. Acad. Sci. U.S.A.">
        <title>Molecular genetic anatomy of inter- and intraserotype variation in the human bacterial pathogen group A Streptococcus.</title>
        <authorList>
            <person name="Beres S.B."/>
            <person name="Richter E.W."/>
            <person name="Nagiec M.J."/>
            <person name="Sumby P."/>
            <person name="Porcella S.F."/>
            <person name="DeLeo F.R."/>
            <person name="Musser J.M."/>
        </authorList>
    </citation>
    <scope>NUCLEOTIDE SEQUENCE [LARGE SCALE GENOMIC DNA]</scope>
    <source>
        <strain>MGAS10270</strain>
    </source>
</reference>
<proteinExistence type="inferred from homology"/>
<accession>Q1JFF9</accession>
<dbReference type="EC" id="2.1.1.33" evidence="2"/>
<dbReference type="EMBL" id="CP000260">
    <property type="protein sequence ID" value="ABF34600.1"/>
    <property type="molecule type" value="Genomic_DNA"/>
</dbReference>
<dbReference type="RefSeq" id="WP_002983387.1">
    <property type="nucleotide sequence ID" value="NZ_CVUH01000010.1"/>
</dbReference>
<dbReference type="SMR" id="Q1JFF9"/>
<dbReference type="GeneID" id="69900424"/>
<dbReference type="KEGG" id="sph:MGAS10270_Spy1535"/>
<dbReference type="HOGENOM" id="CLU_050910_2_1_9"/>
<dbReference type="UniPathway" id="UPA00989"/>
<dbReference type="Proteomes" id="UP000002436">
    <property type="component" value="Chromosome"/>
</dbReference>
<dbReference type="GO" id="GO:0043527">
    <property type="term" value="C:tRNA methyltransferase complex"/>
    <property type="evidence" value="ECO:0007669"/>
    <property type="project" value="TreeGrafter"/>
</dbReference>
<dbReference type="GO" id="GO:0008176">
    <property type="term" value="F:tRNA (guanine(46)-N7)-methyltransferase activity"/>
    <property type="evidence" value="ECO:0007669"/>
    <property type="project" value="UniProtKB-UniRule"/>
</dbReference>
<dbReference type="CDD" id="cd02440">
    <property type="entry name" value="AdoMet_MTases"/>
    <property type="match status" value="1"/>
</dbReference>
<dbReference type="FunFam" id="3.40.50.150:FF:000035">
    <property type="entry name" value="tRNA (guanine-N(7)-)-methyltransferase"/>
    <property type="match status" value="1"/>
</dbReference>
<dbReference type="Gene3D" id="3.40.50.150">
    <property type="entry name" value="Vaccinia Virus protein VP39"/>
    <property type="match status" value="1"/>
</dbReference>
<dbReference type="HAMAP" id="MF_01057">
    <property type="entry name" value="tRNA_methyltr_TrmB"/>
    <property type="match status" value="1"/>
</dbReference>
<dbReference type="InterPro" id="IPR029063">
    <property type="entry name" value="SAM-dependent_MTases_sf"/>
</dbReference>
<dbReference type="InterPro" id="IPR003358">
    <property type="entry name" value="tRNA_(Gua-N-7)_MeTrfase_Trmb"/>
</dbReference>
<dbReference type="InterPro" id="IPR055361">
    <property type="entry name" value="tRNA_methyltr_TrmB_bact"/>
</dbReference>
<dbReference type="NCBIfam" id="NF001080">
    <property type="entry name" value="PRK00121.2-2"/>
    <property type="match status" value="1"/>
</dbReference>
<dbReference type="NCBIfam" id="TIGR00091">
    <property type="entry name" value="tRNA (guanosine(46)-N7)-methyltransferase TrmB"/>
    <property type="match status" value="1"/>
</dbReference>
<dbReference type="PANTHER" id="PTHR23417">
    <property type="entry name" value="3-DEOXY-D-MANNO-OCTULOSONIC-ACID TRANSFERASE/TRNA GUANINE-N 7 - -METHYLTRANSFERASE"/>
    <property type="match status" value="1"/>
</dbReference>
<dbReference type="PANTHER" id="PTHR23417:SF14">
    <property type="entry name" value="PENTACOTRIPEPTIDE-REPEAT REGION OF PRORP DOMAIN-CONTAINING PROTEIN"/>
    <property type="match status" value="1"/>
</dbReference>
<dbReference type="Pfam" id="PF02390">
    <property type="entry name" value="Methyltransf_4"/>
    <property type="match status" value="1"/>
</dbReference>
<dbReference type="SUPFAM" id="SSF53335">
    <property type="entry name" value="S-adenosyl-L-methionine-dependent methyltransferases"/>
    <property type="match status" value="1"/>
</dbReference>
<dbReference type="PROSITE" id="PS51625">
    <property type="entry name" value="SAM_MT_TRMB"/>
    <property type="match status" value="1"/>
</dbReference>
<gene>
    <name evidence="2" type="primary">trmB</name>
    <name type="ordered locus">MGAS10270_Spy1535</name>
</gene>
<evidence type="ECO:0000250" key="1"/>
<evidence type="ECO:0000255" key="2">
    <source>
        <dbReference type="HAMAP-Rule" id="MF_01057"/>
    </source>
</evidence>
<comment type="function">
    <text evidence="2">Catalyzes the formation of N(7)-methylguanine at position 46 (m7G46) in tRNA.</text>
</comment>
<comment type="catalytic activity">
    <reaction evidence="2">
        <text>guanosine(46) in tRNA + S-adenosyl-L-methionine = N(7)-methylguanosine(46) in tRNA + S-adenosyl-L-homocysteine</text>
        <dbReference type="Rhea" id="RHEA:42708"/>
        <dbReference type="Rhea" id="RHEA-COMP:10188"/>
        <dbReference type="Rhea" id="RHEA-COMP:10189"/>
        <dbReference type="ChEBI" id="CHEBI:57856"/>
        <dbReference type="ChEBI" id="CHEBI:59789"/>
        <dbReference type="ChEBI" id="CHEBI:74269"/>
        <dbReference type="ChEBI" id="CHEBI:74480"/>
        <dbReference type="EC" id="2.1.1.33"/>
    </reaction>
</comment>
<comment type="pathway">
    <text evidence="2">tRNA modification; N(7)-methylguanine-tRNA biosynthesis.</text>
</comment>
<comment type="similarity">
    <text evidence="2">Belongs to the class I-like SAM-binding methyltransferase superfamily. TrmB family.</text>
</comment>
<feature type="chain" id="PRO_0000288237" description="tRNA (guanine-N(7)-)-methyltransferase">
    <location>
        <begin position="1"/>
        <end position="211"/>
    </location>
</feature>
<feature type="region of interest" description="Interaction with RNA" evidence="2">
    <location>
        <begin position="124"/>
        <end position="129"/>
    </location>
</feature>
<feature type="active site" evidence="1">
    <location>
        <position position="118"/>
    </location>
</feature>
<feature type="binding site" evidence="2">
    <location>
        <position position="44"/>
    </location>
    <ligand>
        <name>S-adenosyl-L-methionine</name>
        <dbReference type="ChEBI" id="CHEBI:59789"/>
    </ligand>
</feature>
<feature type="binding site" evidence="2">
    <location>
        <position position="69"/>
    </location>
    <ligand>
        <name>S-adenosyl-L-methionine</name>
        <dbReference type="ChEBI" id="CHEBI:59789"/>
    </ligand>
</feature>
<feature type="binding site" evidence="2">
    <location>
        <position position="96"/>
    </location>
    <ligand>
        <name>S-adenosyl-L-methionine</name>
        <dbReference type="ChEBI" id="CHEBI:59789"/>
    </ligand>
</feature>
<feature type="binding site" evidence="2">
    <location>
        <position position="118"/>
    </location>
    <ligand>
        <name>S-adenosyl-L-methionine</name>
        <dbReference type="ChEBI" id="CHEBI:59789"/>
    </ligand>
</feature>
<feature type="binding site" evidence="2">
    <location>
        <position position="122"/>
    </location>
    <ligand>
        <name>substrate</name>
    </ligand>
</feature>
<feature type="binding site" evidence="2">
    <location>
        <position position="154"/>
    </location>
    <ligand>
        <name>substrate</name>
    </ligand>
</feature>
<feature type="binding site" evidence="2">
    <location>
        <begin position="191"/>
        <end position="194"/>
    </location>
    <ligand>
        <name>substrate</name>
    </ligand>
</feature>